<name>FENR_RICM5</name>
<gene>
    <name type="ordered locus">RMA_0647</name>
</gene>
<keyword id="KW-0274">FAD</keyword>
<keyword id="KW-0285">Flavoprotein</keyword>
<keyword id="KW-0521">NADP</keyword>
<keyword id="KW-0560">Oxidoreductase</keyword>
<comment type="catalytic activity">
    <reaction evidence="1">
        <text>2 reduced [2Fe-2S]-[ferredoxin] + NADP(+) + H(+) = 2 oxidized [2Fe-2S]-[ferredoxin] + NADPH</text>
        <dbReference type="Rhea" id="RHEA:20125"/>
        <dbReference type="Rhea" id="RHEA-COMP:10000"/>
        <dbReference type="Rhea" id="RHEA-COMP:10001"/>
        <dbReference type="ChEBI" id="CHEBI:15378"/>
        <dbReference type="ChEBI" id="CHEBI:33737"/>
        <dbReference type="ChEBI" id="CHEBI:33738"/>
        <dbReference type="ChEBI" id="CHEBI:57783"/>
        <dbReference type="ChEBI" id="CHEBI:58349"/>
        <dbReference type="EC" id="1.18.1.2"/>
    </reaction>
</comment>
<comment type="cofactor">
    <cofactor evidence="1">
        <name>FAD</name>
        <dbReference type="ChEBI" id="CHEBI:57692"/>
    </cofactor>
    <text evidence="1">Binds 1 FAD per subunit.</text>
</comment>
<comment type="subunit">
    <text evidence="1">Homodimer.</text>
</comment>
<comment type="similarity">
    <text evidence="1">Belongs to the ferredoxin--NADP reductase type 2 family.</text>
</comment>
<comment type="sequence caution" evidence="2">
    <conflict type="erroneous initiation">
        <sequence resource="EMBL-CDS" id="ABV84818"/>
    </conflict>
</comment>
<feature type="chain" id="PRO_0000364926" description="Ferredoxin--NADP reductase">
    <location>
        <begin position="1"/>
        <end position="334"/>
    </location>
</feature>
<feature type="binding site" evidence="1">
    <location>
        <position position="33"/>
    </location>
    <ligand>
        <name>FAD</name>
        <dbReference type="ChEBI" id="CHEBI:57692"/>
    </ligand>
</feature>
<feature type="binding site" evidence="1">
    <location>
        <position position="41"/>
    </location>
    <ligand>
        <name>FAD</name>
        <dbReference type="ChEBI" id="CHEBI:57692"/>
    </ligand>
</feature>
<feature type="binding site" evidence="1">
    <location>
        <position position="46"/>
    </location>
    <ligand>
        <name>FAD</name>
        <dbReference type="ChEBI" id="CHEBI:57692"/>
    </ligand>
</feature>
<feature type="binding site" evidence="1">
    <location>
        <position position="86"/>
    </location>
    <ligand>
        <name>FAD</name>
        <dbReference type="ChEBI" id="CHEBI:57692"/>
    </ligand>
</feature>
<feature type="binding site" evidence="1">
    <location>
        <position position="120"/>
    </location>
    <ligand>
        <name>FAD</name>
        <dbReference type="ChEBI" id="CHEBI:57692"/>
    </ligand>
</feature>
<feature type="binding site" evidence="1">
    <location>
        <position position="286"/>
    </location>
    <ligand>
        <name>FAD</name>
        <dbReference type="ChEBI" id="CHEBI:57692"/>
    </ligand>
</feature>
<feature type="binding site" evidence="1">
    <location>
        <position position="327"/>
    </location>
    <ligand>
        <name>FAD</name>
        <dbReference type="ChEBI" id="CHEBI:57692"/>
    </ligand>
</feature>
<evidence type="ECO:0000255" key="1">
    <source>
        <dbReference type="HAMAP-Rule" id="MF_01685"/>
    </source>
</evidence>
<evidence type="ECO:0000305" key="2"/>
<accession>A8F1N2</accession>
<proteinExistence type="inferred from homology"/>
<organism>
    <name type="scientific">Rickettsia massiliae (strain Mtu5)</name>
    <dbReference type="NCBI Taxonomy" id="416276"/>
    <lineage>
        <taxon>Bacteria</taxon>
        <taxon>Pseudomonadati</taxon>
        <taxon>Pseudomonadota</taxon>
        <taxon>Alphaproteobacteria</taxon>
        <taxon>Rickettsiales</taxon>
        <taxon>Rickettsiaceae</taxon>
        <taxon>Rickettsieae</taxon>
        <taxon>Rickettsia</taxon>
        <taxon>spotted fever group</taxon>
    </lineage>
</organism>
<reference key="1">
    <citation type="journal article" date="2007" name="Genome Res.">
        <title>Lateral gene transfer between obligate intracellular bacteria: evidence from the Rickettsia massiliae genome.</title>
        <authorList>
            <person name="Blanc G."/>
            <person name="Ogata H."/>
            <person name="Robert C."/>
            <person name="Audic S."/>
            <person name="Claverie J.-M."/>
            <person name="Raoult D."/>
        </authorList>
    </citation>
    <scope>NUCLEOTIDE SEQUENCE [LARGE SCALE GENOMIC DNA]</scope>
    <source>
        <strain>Mtu5</strain>
    </source>
</reference>
<sequence length="334" mass="36899">MYNTDVVIIGAGPVGLFAVFQAGMLGMKCHVIDAQEVIGGQCITLYPEKPIYDIPAYPKIAAEELIKQLELQAAPFNPIYHLNQQAIELNKQDDFFEIKTSKNTLIKGKVIIIAAGAGSFGPNKPPLANIEDFESKSVFYFINDKSKFAGKNIVIAGGGDSAVDWAIFLSDIANKIYLVHRRDKFTAAPESVRQLRHIAETDKIELVTGYQLNALDGNNAELQSVIVKDLHNNTRKLDANILLPFFGLKQDLGSLANWGLNVKHHHIEVDSSYYQTNIEGIYAIGDIAHYGGKLKLILTGFAEAASSLHHAYSRVFDGKALHFEYSTTKYGEKK</sequence>
<dbReference type="EC" id="1.18.1.2" evidence="1"/>
<dbReference type="EMBL" id="CP000683">
    <property type="protein sequence ID" value="ABV84818.1"/>
    <property type="status" value="ALT_INIT"/>
    <property type="molecule type" value="Genomic_DNA"/>
</dbReference>
<dbReference type="RefSeq" id="WP_041404679.1">
    <property type="nucleotide sequence ID" value="NC_009900.1"/>
</dbReference>
<dbReference type="SMR" id="A8F1N2"/>
<dbReference type="KEGG" id="rms:RMA_0647"/>
<dbReference type="HOGENOM" id="CLU_031864_5_5_5"/>
<dbReference type="Proteomes" id="UP000001311">
    <property type="component" value="Chromosome"/>
</dbReference>
<dbReference type="GO" id="GO:0004324">
    <property type="term" value="F:ferredoxin-NADP+ reductase activity"/>
    <property type="evidence" value="ECO:0007669"/>
    <property type="project" value="UniProtKB-UniRule"/>
</dbReference>
<dbReference type="GO" id="GO:0050660">
    <property type="term" value="F:flavin adenine dinucleotide binding"/>
    <property type="evidence" value="ECO:0007669"/>
    <property type="project" value="UniProtKB-UniRule"/>
</dbReference>
<dbReference type="GO" id="GO:0050661">
    <property type="term" value="F:NADP binding"/>
    <property type="evidence" value="ECO:0007669"/>
    <property type="project" value="UniProtKB-UniRule"/>
</dbReference>
<dbReference type="Gene3D" id="3.50.50.60">
    <property type="entry name" value="FAD/NAD(P)-binding domain"/>
    <property type="match status" value="2"/>
</dbReference>
<dbReference type="HAMAP" id="MF_01685">
    <property type="entry name" value="FENR2"/>
    <property type="match status" value="1"/>
</dbReference>
<dbReference type="InterPro" id="IPR036188">
    <property type="entry name" value="FAD/NAD-bd_sf"/>
</dbReference>
<dbReference type="InterPro" id="IPR023753">
    <property type="entry name" value="FAD/NAD-binding_dom"/>
</dbReference>
<dbReference type="InterPro" id="IPR022890">
    <property type="entry name" value="Fd--NADP_Rdtase_type_2"/>
</dbReference>
<dbReference type="InterPro" id="IPR050097">
    <property type="entry name" value="Ferredoxin-NADP_redctase_2"/>
</dbReference>
<dbReference type="PANTHER" id="PTHR48105">
    <property type="entry name" value="THIOREDOXIN REDUCTASE 1-RELATED-RELATED"/>
    <property type="match status" value="1"/>
</dbReference>
<dbReference type="Pfam" id="PF07992">
    <property type="entry name" value="Pyr_redox_2"/>
    <property type="match status" value="1"/>
</dbReference>
<dbReference type="PRINTS" id="PR00368">
    <property type="entry name" value="FADPNR"/>
</dbReference>
<dbReference type="PRINTS" id="PR00469">
    <property type="entry name" value="PNDRDTASEII"/>
</dbReference>
<dbReference type="SUPFAM" id="SSF51905">
    <property type="entry name" value="FAD/NAD(P)-binding domain"/>
    <property type="match status" value="1"/>
</dbReference>
<protein>
    <recommendedName>
        <fullName evidence="1">Ferredoxin--NADP reductase</fullName>
        <shortName evidence="1">FNR</shortName>
        <shortName evidence="1">Fd-NADP(+) reductase</shortName>
        <ecNumber evidence="1">1.18.1.2</ecNumber>
    </recommendedName>
</protein>